<name>TAOK3_MOUSE</name>
<keyword id="KW-0007">Acetylation</keyword>
<keyword id="KW-0067">ATP-binding</keyword>
<keyword id="KW-1003">Cell membrane</keyword>
<keyword id="KW-0175">Coiled coil</keyword>
<keyword id="KW-0963">Cytoplasm</keyword>
<keyword id="KW-0227">DNA damage</keyword>
<keyword id="KW-0234">DNA repair</keyword>
<keyword id="KW-0418">Kinase</keyword>
<keyword id="KW-0551">Lipid droplet</keyword>
<keyword id="KW-0472">Membrane</keyword>
<keyword id="KW-0547">Nucleotide-binding</keyword>
<keyword id="KW-0597">Phosphoprotein</keyword>
<keyword id="KW-1185">Reference proteome</keyword>
<keyword id="KW-0723">Serine/threonine-protein kinase</keyword>
<keyword id="KW-0808">Transferase</keyword>
<accession>Q8BYC6</accession>
<accession>B2RY27</accession>
<accession>Q3V3B3</accession>
<sequence>MRKGALKDPEIADLFFKDDPEELFIDLHEIGHGSFGAVYFATNAHTNEVVAVKKMSYSGKQTHEKWQDILKEVKFLQQLKHPNTIEYKGCYLKEHTAWLVMEYCLGSASDLLEVHKKPLQEVEIAAITHGALQGLAYLHFHSLIHRDIKAGNILLTEPGQVKLADFGSASMASPANSFVGTPYWMAPEVILAMDEGQYDGKVDIWSLGITCIELAERKPPLFNMNAMSALYHIAQNDSPTLQSREWTDSFRRFVDYCLHKIPQERPAAVELLRHDFIRRERPPKVLIDLIQRTKDAVRELDNLQYRKMKKILFQETRNGPLNESQEEEEDGEQGSNLNREVDSLGSIHSIPSTSVSTGSRSSSVNSMQEVMDESSSELVMMQEDEGTANSSASTVHKKDHVFVRDEAGHGDPRPEPRPTQSVQSRALHYRNRERFATIKSASLVTRQIHEHEQENELREQMSGYKRMRRQHQKQLIALENKLKAEMDEHRLKLQKEVETHANNSSIELEKLAKKQVATIEKEAKVAAADEKKFQQQILAQQKKDLTTFLESQKKQYKICKEKIKEEMNEDHSTPKKEKQERISKHKENLQHTQAEEEAHLLTQQRLYYDRNCRFFKRKIMIKRHEVEQQNIREELNKKRTQKEMEHAMLIRHDESTRELEYRQLHTLQKLRMDLIRLQHQTELENQLEYNKRRERELHRKHVMELRQQPKNLKAMEMQIKKQFQDTCKVQTKQYKALKNHQLEVTPKNEHKAILKTLKDEQTRKLAILAEQYEQSINEMMASQALRLDEAQEAECQALRLQLQQEMELLNAYQSKIKMQTEAQHERELQKLEQRVSLRRAHLEQKIEEELAALQKERSERIKTLLERQERETETFDMESLRMGFGNLVTLDFPKEDYR</sequence>
<comment type="function">
    <text evidence="2 7 8 9 12 13">Serine/threonine-protein kinase that acts as a regulator of the p38/MAPK14 stress-activated MAPK cascade and of the MAPK8/JNK cascade (By similarity). In response to DNA damage, involved in the G2/M transition DNA damage checkpoint by activating the p38/MAPK14 stress-activated MAPK cascade, probably by mediating phosphorylation of upstream MAP2K3 and MAP2K6 kinases (By similarity). Inhibits basal activity of the MAPK8/JNK cascade and diminishes its activation in response to epidermal growth factor (EGF) (By similarity). Positively regulates canonical T cell receptor (TCR) signaling by preventing early PTPN6/SHP1-mediated inactivation of LCK, ensuring sustained TCR signaling that is required for optimal activation and differentiation of T cells (By similarity). Phosphorylates PTPN6/SHP1 on 'Thr-394', leading to its polyubiquitination and subsequent proteasomal degradation (By similarity). Required for cell surface expression of metalloprotease ADAM10 on type 1 transitional B cells which is necessary for their NOTCH-mediated development into marginal zone B cells (PubMed:28068307). Also required for the NOTCH-mediated terminal differentiation of splenic conventional type 2 dendritic cells (PubMed:33214146). Positively regulates osteoblast differentiation by acting as an upstream activator of the JNK pathway (PubMed:32807497). Promotes JNK signaling in hepatocytes and positively regulates hepatocyte lipid storage by inhibiting beta-oxidation and triacylglycerol secretion while enhancing lipid synthesis (By similarity). Restricts age-associated inflammation by negatively regulating differentiation of macrophages and their production of pro-inflammatory cytokines (PubMed:37400834). Plays a role in negatively regulating the abundance of regulatory T cells in white adipose tissue (PubMed:37347461).</text>
</comment>
<comment type="catalytic activity">
    <reaction>
        <text>L-seryl-[protein] + ATP = O-phospho-L-seryl-[protein] + ADP + H(+)</text>
        <dbReference type="Rhea" id="RHEA:17989"/>
        <dbReference type="Rhea" id="RHEA-COMP:9863"/>
        <dbReference type="Rhea" id="RHEA-COMP:11604"/>
        <dbReference type="ChEBI" id="CHEBI:15378"/>
        <dbReference type="ChEBI" id="CHEBI:29999"/>
        <dbReference type="ChEBI" id="CHEBI:30616"/>
        <dbReference type="ChEBI" id="CHEBI:83421"/>
        <dbReference type="ChEBI" id="CHEBI:456216"/>
        <dbReference type="EC" id="2.7.11.1"/>
    </reaction>
</comment>
<comment type="catalytic activity">
    <reaction>
        <text>L-threonyl-[protein] + ATP = O-phospho-L-threonyl-[protein] + ADP + H(+)</text>
        <dbReference type="Rhea" id="RHEA:46608"/>
        <dbReference type="Rhea" id="RHEA-COMP:11060"/>
        <dbReference type="Rhea" id="RHEA-COMP:11605"/>
        <dbReference type="ChEBI" id="CHEBI:15378"/>
        <dbReference type="ChEBI" id="CHEBI:30013"/>
        <dbReference type="ChEBI" id="CHEBI:30616"/>
        <dbReference type="ChEBI" id="CHEBI:61977"/>
        <dbReference type="ChEBI" id="CHEBI:456216"/>
        <dbReference type="EC" id="2.7.11.1"/>
    </reaction>
</comment>
<comment type="subunit">
    <text evidence="2">Self-associates. Interacts with ERN1 and TRAF2. Interaction with TRAF2 is facilitated under ER stress conditions, such as treatment with tunicamycin, and may promote TRAF2 phosphorylation. Interacts (via N-terminus) with STK25; the interaction promotes STK25 abundance at the level of protein expression and/or stability.</text>
</comment>
<comment type="subcellular location">
    <subcellularLocation>
        <location evidence="2">Cytoplasm</location>
    </subcellularLocation>
    <subcellularLocation>
        <location evidence="2">Cell membrane</location>
        <topology evidence="2">Peripheral membrane protein</topology>
    </subcellularLocation>
    <subcellularLocation>
        <location evidence="2">Membrane raft</location>
    </subcellularLocation>
    <subcellularLocation>
        <location evidence="11">Lipid droplet</location>
    </subcellularLocation>
    <text evidence="2 11">Located primarily outside cell membrane rafts and remains outside upon canonical TCR ligation (By similarity). A small pool is detectable in cell membrane rafts in resting conditions but relocates outside the rafts upon TCR signaling (By similarity). Localizes to lipid droplets in hepatocytes (PubMed:34634521).</text>
</comment>
<comment type="induction">
    <text evidence="11">Up-regulated by a high-fat diet (at protein level).</text>
</comment>
<comment type="PTM">
    <text evidence="2">Autophosphorylated. Phosphorylation at Ser-324 by ATM following DNA damage is required for activation of the p38/MAPK14 stress-activated MAPK cascade. Phosphorylated at Ser-324 and on Tyr residues during T cell activation. Phosphorylated by LRRK2.</text>
</comment>
<comment type="disruption phenotype">
    <text evidence="7 8 9 10 12 13 14">Lack of marginal zone B cells (PubMed:28068307). Reduced naive CD4+ T cell abundance in spleen, lymph nodes and bone marrow (PubMed:38166031). Reduced protein levels of PTPN6/SHP1 in CD4+ T cells with no difference in transcript abundance (PubMed:38166031). Increased phosphorylation of LCK at 'Tyr-505' (PubMed:38166031). Lack of ESAM+ CD4+ type 2 conventional dendritic cells in the spleen and impaired CD4+ T cell immune responses (PubMed:33214146). Impaired osteoblast differentiation and aberrant skeletal mineralization with mice displaying enlarged fontanelles, delayed closure of the sagittal suture, occipital hypomineralization and low bone mass in long bones (PubMed:32807497). Development of severe ulcerative dermatitis and splenomegaly with age (PubMed:37400834). Increase in myeloid cells and decrease in lymphocyte populations in the spleen with hematopoietic progenitor cells favoring myeloid lineage commitment (PubMed:37400834). Increased pro-inflammatory cytokine levels in the blood (PubMed:37400834). Failure to develop house dust mite (HDM)-induced asthma (PubMed:34506849). Reduction in HDM-specific T helper 2 (TH2) cell polarization, impaired lung dendritic cell migration to the draining lymph nodes and reduced response of type 2 innate lymphocytes (ILC2) to IL13 (PubMed:34506849). Increase in ST2+ regulatory T cells in white adipose tissue (WAT), lung, liver, blood, spleen and mediastinal lymph node (PubMed:37347461). Reduction in ILC1 and ILC2 innate lymphoid cells in male and female WAT and reduction in conventional natural killer cells in male WAT (PubMed:37347461). Conditional knockout in immune cells results in significantly reduced airway eosinophilia and B cells (PubMed:34506849).</text>
</comment>
<comment type="miscellaneous">
    <text evidence="10">Contributes to the development of house dust mite-induced asthma and may prove to be a useful target for asthma therapy.</text>
</comment>
<comment type="similarity">
    <text evidence="15">Belongs to the protein kinase superfamily. STE Ser/Thr protein kinase family. STE20 subfamily.</text>
</comment>
<feature type="chain" id="PRO_0000086738" description="Serine/threonine-protein kinase TAO3">
    <location>
        <begin position="1"/>
        <end position="898"/>
    </location>
</feature>
<feature type="domain" description="Protein kinase" evidence="4">
    <location>
        <begin position="24"/>
        <end position="277"/>
    </location>
</feature>
<feature type="region of interest" description="Disordered" evidence="6">
    <location>
        <begin position="316"/>
        <end position="375"/>
    </location>
</feature>
<feature type="region of interest" description="Disordered" evidence="6">
    <location>
        <begin position="405"/>
        <end position="424"/>
    </location>
</feature>
<feature type="region of interest" description="Disordered" evidence="6">
    <location>
        <begin position="565"/>
        <end position="596"/>
    </location>
</feature>
<feature type="coiled-coil region" evidence="3">
    <location>
        <begin position="452"/>
        <end position="502"/>
    </location>
</feature>
<feature type="coiled-coil region" evidence="3">
    <location>
        <begin position="548"/>
        <end position="649"/>
    </location>
</feature>
<feature type="coiled-coil region" evidence="3">
    <location>
        <begin position="754"/>
        <end position="871"/>
    </location>
</feature>
<feature type="compositionally biased region" description="Low complexity" evidence="6">
    <location>
        <begin position="349"/>
        <end position="366"/>
    </location>
</feature>
<feature type="compositionally biased region" description="Basic and acidic residues" evidence="6">
    <location>
        <begin position="405"/>
        <end position="416"/>
    </location>
</feature>
<feature type="active site" description="Proton acceptor" evidence="4 5">
    <location>
        <position position="147"/>
    </location>
</feature>
<feature type="binding site" evidence="4">
    <location>
        <begin position="30"/>
        <end position="38"/>
    </location>
    <ligand>
        <name>ATP</name>
        <dbReference type="ChEBI" id="CHEBI:30616"/>
    </ligand>
</feature>
<feature type="binding site" evidence="4">
    <location>
        <position position="53"/>
    </location>
    <ligand>
        <name>ATP</name>
        <dbReference type="ChEBI" id="CHEBI:30616"/>
    </ligand>
</feature>
<feature type="modified residue" description="Phosphoserine; by ATM" evidence="16 17 18">
    <location>
        <position position="324"/>
    </location>
</feature>
<feature type="modified residue" description="Phosphoserine" evidence="1">
    <location>
        <position position="343"/>
    </location>
</feature>
<feature type="modified residue" description="Phosphoserine" evidence="18">
    <location>
        <position position="346"/>
    </location>
</feature>
<feature type="modified residue" description="Phosphoserine" evidence="18">
    <location>
        <position position="349"/>
    </location>
</feature>
<feature type="modified residue" description="Phosphothreonine" evidence="18">
    <location>
        <position position="357"/>
    </location>
</feature>
<feature type="modified residue" description="Phosphoserine" evidence="18">
    <location>
        <position position="359"/>
    </location>
</feature>
<feature type="modified residue" description="Phosphoserine" evidence="2">
    <location>
        <position position="442"/>
    </location>
</feature>
<feature type="modified residue" description="N6-acetyllysine" evidence="19">
    <location>
        <position position="830"/>
    </location>
</feature>
<feature type="mutagenesis site" description="Reduces the number of eosinophils in the lungs." evidence="10">
    <original>K</original>
    <variation>D</variation>
    <location>
        <position position="53"/>
    </location>
</feature>
<feature type="sequence conflict" description="In Ref. 1; AAI58073." evidence="15" ref="1">
    <original>A</original>
    <variation>V</variation>
    <location>
        <position position="388"/>
    </location>
</feature>
<dbReference type="EC" id="2.7.11.1"/>
<dbReference type="EMBL" id="BC158072">
    <property type="protein sequence ID" value="AAI58073.1"/>
    <property type="molecule type" value="mRNA"/>
</dbReference>
<dbReference type="EMBL" id="AK040531">
    <property type="protein sequence ID" value="BAC30618.1"/>
    <property type="molecule type" value="mRNA"/>
</dbReference>
<dbReference type="EMBL" id="AK042181">
    <property type="protein sequence ID" value="BAE20625.1"/>
    <property type="molecule type" value="mRNA"/>
</dbReference>
<dbReference type="CCDS" id="CCDS39233.1"/>
<dbReference type="RefSeq" id="NP_001074777.1">
    <property type="nucleotide sequence ID" value="NM_001081308.2"/>
</dbReference>
<dbReference type="RefSeq" id="NP_001186614.1">
    <property type="nucleotide sequence ID" value="NM_001199685.1"/>
</dbReference>
<dbReference type="RefSeq" id="NP_899129.2">
    <property type="nucleotide sequence ID" value="NM_183306.2"/>
</dbReference>
<dbReference type="RefSeq" id="XP_006530448.1">
    <property type="nucleotide sequence ID" value="XM_006530385.5"/>
</dbReference>
<dbReference type="RefSeq" id="XP_011246521.1">
    <property type="nucleotide sequence ID" value="XM_011248219.4"/>
</dbReference>
<dbReference type="RefSeq" id="XP_011246522.1">
    <property type="nucleotide sequence ID" value="XM_011248220.4"/>
</dbReference>
<dbReference type="SMR" id="Q8BYC6"/>
<dbReference type="BioGRID" id="236916">
    <property type="interactions" value="17"/>
</dbReference>
<dbReference type="FunCoup" id="Q8BYC6">
    <property type="interactions" value="2583"/>
</dbReference>
<dbReference type="STRING" id="10090.ENSMUSP00000107609"/>
<dbReference type="iPTMnet" id="Q8BYC6"/>
<dbReference type="PhosphoSitePlus" id="Q8BYC6"/>
<dbReference type="SwissPalm" id="Q8BYC6"/>
<dbReference type="jPOST" id="Q8BYC6"/>
<dbReference type="PaxDb" id="10090-ENSMUSP00000107609"/>
<dbReference type="PeptideAtlas" id="Q8BYC6"/>
<dbReference type="ProteomicsDB" id="263124"/>
<dbReference type="Pumba" id="Q8BYC6"/>
<dbReference type="Antibodypedia" id="2111">
    <property type="antibodies" value="390 antibodies from 36 providers"/>
</dbReference>
<dbReference type="Ensembl" id="ENSMUST00000092889.12">
    <property type="protein sequence ID" value="ENSMUSP00000090565.6"/>
    <property type="gene ID" value="ENSMUSG00000061288.14"/>
</dbReference>
<dbReference type="Ensembl" id="ENSMUST00000111978.8">
    <property type="protein sequence ID" value="ENSMUSP00000107609.2"/>
    <property type="gene ID" value="ENSMUSG00000061288.14"/>
</dbReference>
<dbReference type="Ensembl" id="ENSMUST00000179276.8">
    <property type="protein sequence ID" value="ENSMUSP00000136750.2"/>
    <property type="gene ID" value="ENSMUSG00000061288.14"/>
</dbReference>
<dbReference type="GeneID" id="330177"/>
<dbReference type="KEGG" id="mmu:330177"/>
<dbReference type="UCSC" id="uc008zfh.2">
    <property type="organism name" value="mouse"/>
</dbReference>
<dbReference type="AGR" id="MGI:3041177"/>
<dbReference type="CTD" id="51347"/>
<dbReference type="MGI" id="MGI:3041177">
    <property type="gene designation" value="Taok3"/>
</dbReference>
<dbReference type="VEuPathDB" id="HostDB:ENSMUSG00000061288"/>
<dbReference type="eggNOG" id="KOG0577">
    <property type="taxonomic scope" value="Eukaryota"/>
</dbReference>
<dbReference type="GeneTree" id="ENSGT00940000155735"/>
<dbReference type="InParanoid" id="Q8BYC6"/>
<dbReference type="OMA" id="KEKIKEX"/>
<dbReference type="OrthoDB" id="10016527at2759"/>
<dbReference type="PhylomeDB" id="Q8BYC6"/>
<dbReference type="TreeFam" id="TF351444"/>
<dbReference type="Reactome" id="R-MMU-9013149">
    <property type="pathway name" value="RAC1 GTPase cycle"/>
</dbReference>
<dbReference type="Reactome" id="R-MMU-9013404">
    <property type="pathway name" value="RAC2 GTPase cycle"/>
</dbReference>
<dbReference type="Reactome" id="R-MMU-9013423">
    <property type="pathway name" value="RAC3 GTPase cycle"/>
</dbReference>
<dbReference type="BioGRID-ORCS" id="330177">
    <property type="hits" value="0 hits in 116 CRISPR screens"/>
</dbReference>
<dbReference type="ChiTaRS" id="Taok3">
    <property type="organism name" value="mouse"/>
</dbReference>
<dbReference type="PRO" id="PR:Q8BYC6"/>
<dbReference type="Proteomes" id="UP000000589">
    <property type="component" value="Chromosome 5"/>
</dbReference>
<dbReference type="RNAct" id="Q8BYC6">
    <property type="molecule type" value="protein"/>
</dbReference>
<dbReference type="Bgee" id="ENSMUSG00000061288">
    <property type="expression patterns" value="Expressed in rostral migratory stream and 262 other cell types or tissues"/>
</dbReference>
<dbReference type="ExpressionAtlas" id="Q8BYC6">
    <property type="expression patterns" value="baseline and differential"/>
</dbReference>
<dbReference type="GO" id="GO:0005737">
    <property type="term" value="C:cytoplasm"/>
    <property type="evidence" value="ECO:0007669"/>
    <property type="project" value="UniProtKB-SubCell"/>
</dbReference>
<dbReference type="GO" id="GO:0005811">
    <property type="term" value="C:lipid droplet"/>
    <property type="evidence" value="ECO:0007669"/>
    <property type="project" value="Ensembl"/>
</dbReference>
<dbReference type="GO" id="GO:0044853">
    <property type="term" value="C:plasma membrane raft"/>
    <property type="evidence" value="ECO:0007669"/>
    <property type="project" value="Ensembl"/>
</dbReference>
<dbReference type="GO" id="GO:0005524">
    <property type="term" value="F:ATP binding"/>
    <property type="evidence" value="ECO:0007669"/>
    <property type="project" value="UniProtKB-KW"/>
</dbReference>
<dbReference type="GO" id="GO:0106310">
    <property type="term" value="F:protein serine kinase activity"/>
    <property type="evidence" value="ECO:0007669"/>
    <property type="project" value="RHEA"/>
</dbReference>
<dbReference type="GO" id="GO:0004674">
    <property type="term" value="F:protein serine/threonine kinase activity"/>
    <property type="evidence" value="ECO:0007669"/>
    <property type="project" value="UniProtKB-KW"/>
</dbReference>
<dbReference type="GO" id="GO:0006974">
    <property type="term" value="P:DNA damage response"/>
    <property type="evidence" value="ECO:0000250"/>
    <property type="project" value="UniProtKB"/>
</dbReference>
<dbReference type="GO" id="GO:0006281">
    <property type="term" value="P:DNA repair"/>
    <property type="evidence" value="ECO:0007669"/>
    <property type="project" value="UniProtKB-KW"/>
</dbReference>
<dbReference type="GO" id="GO:0000165">
    <property type="term" value="P:MAPK cascade"/>
    <property type="evidence" value="ECO:0007669"/>
    <property type="project" value="Ensembl"/>
</dbReference>
<dbReference type="GO" id="GO:0007095">
    <property type="term" value="P:mitotic G2 DNA damage checkpoint signaling"/>
    <property type="evidence" value="ECO:0000250"/>
    <property type="project" value="UniProtKB"/>
</dbReference>
<dbReference type="GO" id="GO:0046329">
    <property type="term" value="P:negative regulation of JNK cascade"/>
    <property type="evidence" value="ECO:0007669"/>
    <property type="project" value="Ensembl"/>
</dbReference>
<dbReference type="GO" id="GO:0046330">
    <property type="term" value="P:positive regulation of JNK cascade"/>
    <property type="evidence" value="ECO:0007669"/>
    <property type="project" value="Ensembl"/>
</dbReference>
<dbReference type="GO" id="GO:0010884">
    <property type="term" value="P:positive regulation of lipid storage"/>
    <property type="evidence" value="ECO:0007669"/>
    <property type="project" value="Ensembl"/>
</dbReference>
<dbReference type="GO" id="GO:0045669">
    <property type="term" value="P:positive regulation of osteoblast differentiation"/>
    <property type="evidence" value="ECO:0007669"/>
    <property type="project" value="Ensembl"/>
</dbReference>
<dbReference type="GO" id="GO:0032874">
    <property type="term" value="P:positive regulation of stress-activated MAPK cascade"/>
    <property type="evidence" value="ECO:0000250"/>
    <property type="project" value="UniProtKB"/>
</dbReference>
<dbReference type="GO" id="GO:0050862">
    <property type="term" value="P:positive regulation of T cell receptor signaling pathway"/>
    <property type="evidence" value="ECO:0007669"/>
    <property type="project" value="Ensembl"/>
</dbReference>
<dbReference type="FunFam" id="1.10.510.10:FF:000030">
    <property type="entry name" value="Serine/threonine-protein kinase TAO2, putative"/>
    <property type="match status" value="1"/>
</dbReference>
<dbReference type="FunFam" id="3.30.200.20:FF:000029">
    <property type="entry name" value="Serine/threonine-protein kinase TAO2, putative"/>
    <property type="match status" value="1"/>
</dbReference>
<dbReference type="Gene3D" id="3.30.200.20">
    <property type="entry name" value="Phosphorylase Kinase, domain 1"/>
    <property type="match status" value="1"/>
</dbReference>
<dbReference type="Gene3D" id="1.10.510.10">
    <property type="entry name" value="Transferase(Phosphotransferase) domain 1"/>
    <property type="match status" value="1"/>
</dbReference>
<dbReference type="InterPro" id="IPR011009">
    <property type="entry name" value="Kinase-like_dom_sf"/>
</dbReference>
<dbReference type="InterPro" id="IPR000719">
    <property type="entry name" value="Prot_kinase_dom"/>
</dbReference>
<dbReference type="InterPro" id="IPR017441">
    <property type="entry name" value="Protein_kinase_ATP_BS"/>
</dbReference>
<dbReference type="InterPro" id="IPR008271">
    <property type="entry name" value="Ser/Thr_kinase_AS"/>
</dbReference>
<dbReference type="InterPro" id="IPR051234">
    <property type="entry name" value="TAO_STE20_kinase"/>
</dbReference>
<dbReference type="PANTHER" id="PTHR47167">
    <property type="entry name" value="SERINE/THREONINE-PROTEIN KINASE TAO1-LIKE PROTEIN"/>
    <property type="match status" value="1"/>
</dbReference>
<dbReference type="PANTHER" id="PTHR47167:SF10">
    <property type="entry name" value="SERINE_THREONINE-PROTEIN KINASE TAO3"/>
    <property type="match status" value="1"/>
</dbReference>
<dbReference type="Pfam" id="PF00069">
    <property type="entry name" value="Pkinase"/>
    <property type="match status" value="1"/>
</dbReference>
<dbReference type="SMART" id="SM00220">
    <property type="entry name" value="S_TKc"/>
    <property type="match status" value="1"/>
</dbReference>
<dbReference type="SUPFAM" id="SSF56112">
    <property type="entry name" value="Protein kinase-like (PK-like)"/>
    <property type="match status" value="1"/>
</dbReference>
<dbReference type="PROSITE" id="PS00107">
    <property type="entry name" value="PROTEIN_KINASE_ATP"/>
    <property type="match status" value="1"/>
</dbReference>
<dbReference type="PROSITE" id="PS50011">
    <property type="entry name" value="PROTEIN_KINASE_DOM"/>
    <property type="match status" value="1"/>
</dbReference>
<dbReference type="PROSITE" id="PS00108">
    <property type="entry name" value="PROTEIN_KINASE_ST"/>
    <property type="match status" value="1"/>
</dbReference>
<proteinExistence type="evidence at protein level"/>
<protein>
    <recommendedName>
        <fullName>Serine/threonine-protein kinase TAO3</fullName>
        <ecNumber>2.7.11.1</ecNumber>
    </recommendedName>
    <alternativeName>
        <fullName>Thousand and one amino acid protein 3</fullName>
    </alternativeName>
</protein>
<organism>
    <name type="scientific">Mus musculus</name>
    <name type="common">Mouse</name>
    <dbReference type="NCBI Taxonomy" id="10090"/>
    <lineage>
        <taxon>Eukaryota</taxon>
        <taxon>Metazoa</taxon>
        <taxon>Chordata</taxon>
        <taxon>Craniata</taxon>
        <taxon>Vertebrata</taxon>
        <taxon>Euteleostomi</taxon>
        <taxon>Mammalia</taxon>
        <taxon>Eutheria</taxon>
        <taxon>Euarchontoglires</taxon>
        <taxon>Glires</taxon>
        <taxon>Rodentia</taxon>
        <taxon>Myomorpha</taxon>
        <taxon>Muroidea</taxon>
        <taxon>Muridae</taxon>
        <taxon>Murinae</taxon>
        <taxon>Mus</taxon>
        <taxon>Mus</taxon>
    </lineage>
</organism>
<reference key="1">
    <citation type="journal article" date="2004" name="Genome Res.">
        <title>The status, quality, and expansion of the NIH full-length cDNA project: the Mammalian Gene Collection (MGC).</title>
        <authorList>
            <consortium name="The MGC Project Team"/>
        </authorList>
    </citation>
    <scope>NUCLEOTIDE SEQUENCE [LARGE SCALE MRNA]</scope>
</reference>
<reference key="2">
    <citation type="journal article" date="2005" name="Science">
        <title>The transcriptional landscape of the mammalian genome.</title>
        <authorList>
            <person name="Carninci P."/>
            <person name="Kasukawa T."/>
            <person name="Katayama S."/>
            <person name="Gough J."/>
            <person name="Frith M.C."/>
            <person name="Maeda N."/>
            <person name="Oyama R."/>
            <person name="Ravasi T."/>
            <person name="Lenhard B."/>
            <person name="Wells C."/>
            <person name="Kodzius R."/>
            <person name="Shimokawa K."/>
            <person name="Bajic V.B."/>
            <person name="Brenner S.E."/>
            <person name="Batalov S."/>
            <person name="Forrest A.R."/>
            <person name="Zavolan M."/>
            <person name="Davis M.J."/>
            <person name="Wilming L.G."/>
            <person name="Aidinis V."/>
            <person name="Allen J.E."/>
            <person name="Ambesi-Impiombato A."/>
            <person name="Apweiler R."/>
            <person name="Aturaliya R.N."/>
            <person name="Bailey T.L."/>
            <person name="Bansal M."/>
            <person name="Baxter L."/>
            <person name="Beisel K.W."/>
            <person name="Bersano T."/>
            <person name="Bono H."/>
            <person name="Chalk A.M."/>
            <person name="Chiu K.P."/>
            <person name="Choudhary V."/>
            <person name="Christoffels A."/>
            <person name="Clutterbuck D.R."/>
            <person name="Crowe M.L."/>
            <person name="Dalla E."/>
            <person name="Dalrymple B.P."/>
            <person name="de Bono B."/>
            <person name="Della Gatta G."/>
            <person name="di Bernardo D."/>
            <person name="Down T."/>
            <person name="Engstrom P."/>
            <person name="Fagiolini M."/>
            <person name="Faulkner G."/>
            <person name="Fletcher C.F."/>
            <person name="Fukushima T."/>
            <person name="Furuno M."/>
            <person name="Futaki S."/>
            <person name="Gariboldi M."/>
            <person name="Georgii-Hemming P."/>
            <person name="Gingeras T.R."/>
            <person name="Gojobori T."/>
            <person name="Green R.E."/>
            <person name="Gustincich S."/>
            <person name="Harbers M."/>
            <person name="Hayashi Y."/>
            <person name="Hensch T.K."/>
            <person name="Hirokawa N."/>
            <person name="Hill D."/>
            <person name="Huminiecki L."/>
            <person name="Iacono M."/>
            <person name="Ikeo K."/>
            <person name="Iwama A."/>
            <person name="Ishikawa T."/>
            <person name="Jakt M."/>
            <person name="Kanapin A."/>
            <person name="Katoh M."/>
            <person name="Kawasawa Y."/>
            <person name="Kelso J."/>
            <person name="Kitamura H."/>
            <person name="Kitano H."/>
            <person name="Kollias G."/>
            <person name="Krishnan S.P."/>
            <person name="Kruger A."/>
            <person name="Kummerfeld S.K."/>
            <person name="Kurochkin I.V."/>
            <person name="Lareau L.F."/>
            <person name="Lazarevic D."/>
            <person name="Lipovich L."/>
            <person name="Liu J."/>
            <person name="Liuni S."/>
            <person name="McWilliam S."/>
            <person name="Madan Babu M."/>
            <person name="Madera M."/>
            <person name="Marchionni L."/>
            <person name="Matsuda H."/>
            <person name="Matsuzawa S."/>
            <person name="Miki H."/>
            <person name="Mignone F."/>
            <person name="Miyake S."/>
            <person name="Morris K."/>
            <person name="Mottagui-Tabar S."/>
            <person name="Mulder N."/>
            <person name="Nakano N."/>
            <person name="Nakauchi H."/>
            <person name="Ng P."/>
            <person name="Nilsson R."/>
            <person name="Nishiguchi S."/>
            <person name="Nishikawa S."/>
            <person name="Nori F."/>
            <person name="Ohara O."/>
            <person name="Okazaki Y."/>
            <person name="Orlando V."/>
            <person name="Pang K.C."/>
            <person name="Pavan W.J."/>
            <person name="Pavesi G."/>
            <person name="Pesole G."/>
            <person name="Petrovsky N."/>
            <person name="Piazza S."/>
            <person name="Reed J."/>
            <person name="Reid J.F."/>
            <person name="Ring B.Z."/>
            <person name="Ringwald M."/>
            <person name="Rost B."/>
            <person name="Ruan Y."/>
            <person name="Salzberg S.L."/>
            <person name="Sandelin A."/>
            <person name="Schneider C."/>
            <person name="Schoenbach C."/>
            <person name="Sekiguchi K."/>
            <person name="Semple C.A."/>
            <person name="Seno S."/>
            <person name="Sessa L."/>
            <person name="Sheng Y."/>
            <person name="Shibata Y."/>
            <person name="Shimada H."/>
            <person name="Shimada K."/>
            <person name="Silva D."/>
            <person name="Sinclair B."/>
            <person name="Sperling S."/>
            <person name="Stupka E."/>
            <person name="Sugiura K."/>
            <person name="Sultana R."/>
            <person name="Takenaka Y."/>
            <person name="Taki K."/>
            <person name="Tammoja K."/>
            <person name="Tan S.L."/>
            <person name="Tang S."/>
            <person name="Taylor M.S."/>
            <person name="Tegner J."/>
            <person name="Teichmann S.A."/>
            <person name="Ueda H.R."/>
            <person name="van Nimwegen E."/>
            <person name="Verardo R."/>
            <person name="Wei C.L."/>
            <person name="Yagi K."/>
            <person name="Yamanishi H."/>
            <person name="Zabarovsky E."/>
            <person name="Zhu S."/>
            <person name="Zimmer A."/>
            <person name="Hide W."/>
            <person name="Bult C."/>
            <person name="Grimmond S.M."/>
            <person name="Teasdale R.D."/>
            <person name="Liu E.T."/>
            <person name="Brusic V."/>
            <person name="Quackenbush J."/>
            <person name="Wahlestedt C."/>
            <person name="Mattick J.S."/>
            <person name="Hume D.A."/>
            <person name="Kai C."/>
            <person name="Sasaki D."/>
            <person name="Tomaru Y."/>
            <person name="Fukuda S."/>
            <person name="Kanamori-Katayama M."/>
            <person name="Suzuki M."/>
            <person name="Aoki J."/>
            <person name="Arakawa T."/>
            <person name="Iida J."/>
            <person name="Imamura K."/>
            <person name="Itoh M."/>
            <person name="Kato T."/>
            <person name="Kawaji H."/>
            <person name="Kawagashira N."/>
            <person name="Kawashima T."/>
            <person name="Kojima M."/>
            <person name="Kondo S."/>
            <person name="Konno H."/>
            <person name="Nakano K."/>
            <person name="Ninomiya N."/>
            <person name="Nishio T."/>
            <person name="Okada M."/>
            <person name="Plessy C."/>
            <person name="Shibata K."/>
            <person name="Shiraki T."/>
            <person name="Suzuki S."/>
            <person name="Tagami M."/>
            <person name="Waki K."/>
            <person name="Watahiki A."/>
            <person name="Okamura-Oho Y."/>
            <person name="Suzuki H."/>
            <person name="Kawai J."/>
            <person name="Hayashizaki Y."/>
        </authorList>
    </citation>
    <scope>NUCLEOTIDE SEQUENCE [LARGE SCALE MRNA] OF 1-561 AND 766-898</scope>
    <source>
        <strain>C57BL/6J</strain>
        <tissue>Thymus</tissue>
    </source>
</reference>
<reference key="3">
    <citation type="journal article" date="2007" name="Proc. Natl. Acad. Sci. U.S.A.">
        <title>Large-scale phosphorylation analysis of mouse liver.</title>
        <authorList>
            <person name="Villen J."/>
            <person name="Beausoleil S.A."/>
            <person name="Gerber S.A."/>
            <person name="Gygi S.P."/>
        </authorList>
    </citation>
    <scope>PHOSPHORYLATION [LARGE SCALE ANALYSIS] AT SER-324</scope>
    <scope>IDENTIFICATION BY MASS SPECTROMETRY [LARGE SCALE ANALYSIS]</scope>
    <source>
        <tissue>Liver</tissue>
    </source>
</reference>
<reference key="4">
    <citation type="journal article" date="2009" name="Immunity">
        <title>The phagosomal proteome in interferon-gamma-activated macrophages.</title>
        <authorList>
            <person name="Trost M."/>
            <person name="English L."/>
            <person name="Lemieux S."/>
            <person name="Courcelles M."/>
            <person name="Desjardins M."/>
            <person name="Thibault P."/>
        </authorList>
    </citation>
    <scope>PHOSPHORYLATION [LARGE SCALE ANALYSIS] AT SER-324</scope>
    <scope>IDENTIFICATION BY MASS SPECTROMETRY [LARGE SCALE ANALYSIS]</scope>
</reference>
<reference key="5">
    <citation type="journal article" date="2010" name="Cell">
        <title>A tissue-specific atlas of mouse protein phosphorylation and expression.</title>
        <authorList>
            <person name="Huttlin E.L."/>
            <person name="Jedrychowski M.P."/>
            <person name="Elias J.E."/>
            <person name="Goswami T."/>
            <person name="Rad R."/>
            <person name="Beausoleil S.A."/>
            <person name="Villen J."/>
            <person name="Haas W."/>
            <person name="Sowa M.E."/>
            <person name="Gygi S.P."/>
        </authorList>
    </citation>
    <scope>PHOSPHORYLATION [LARGE SCALE ANALYSIS] AT SER-324; SER-346; SER-349; THR-357 AND SER-359</scope>
    <scope>IDENTIFICATION BY MASS SPECTROMETRY [LARGE SCALE ANALYSIS]</scope>
    <source>
        <tissue>Brain</tissue>
        <tissue>Brown adipose tissue</tissue>
        <tissue>Kidney</tissue>
        <tissue>Liver</tissue>
        <tissue>Lung</tissue>
        <tissue>Pancreas</tissue>
        <tissue>Spleen</tissue>
        <tissue>Testis</tissue>
    </source>
</reference>
<reference key="6">
    <citation type="journal article" date="2013" name="Mol. Cell">
        <title>SIRT5-mediated lysine desuccinylation impacts diverse metabolic pathways.</title>
        <authorList>
            <person name="Park J."/>
            <person name="Chen Y."/>
            <person name="Tishkoff D.X."/>
            <person name="Peng C."/>
            <person name="Tan M."/>
            <person name="Dai L."/>
            <person name="Xie Z."/>
            <person name="Zhang Y."/>
            <person name="Zwaans B.M."/>
            <person name="Skinner M.E."/>
            <person name="Lombard D.B."/>
            <person name="Zhao Y."/>
        </authorList>
    </citation>
    <scope>ACETYLATION [LARGE SCALE ANALYSIS] AT LYS-830</scope>
    <scope>IDENTIFICATION BY MASS SPECTROMETRY [LARGE SCALE ANALYSIS]</scope>
    <source>
        <tissue>Embryonic fibroblast</tissue>
    </source>
</reference>
<reference key="7">
    <citation type="journal article" date="2017" name="Nat. Immunol.">
        <title>Transitional B cells commit to marginal zone B cell fate by Taok3-mediated surface expression of ADAM10.</title>
        <authorList>
            <person name="Hammad H."/>
            <person name="Vanderkerken M."/>
            <person name="Pouliot P."/>
            <person name="Deswarte K."/>
            <person name="Toussaint W."/>
            <person name="Vergote K."/>
            <person name="Vandersarren L."/>
            <person name="Janssens S."/>
            <person name="Ramou I."/>
            <person name="Savvides S.N."/>
            <person name="Haigh J.J."/>
            <person name="Hendriks R."/>
            <person name="Kopf M."/>
            <person name="Craessaerts K."/>
            <person name="de Strooper B."/>
            <person name="Kearney J.F."/>
            <person name="Conrad D.H."/>
            <person name="Lambrecht B.N."/>
        </authorList>
    </citation>
    <scope>FUNCTION</scope>
    <scope>DISRUPTION PHENOTYPE</scope>
</reference>
<reference key="8">
    <citation type="journal article" date="2020" name="Biochem. Biophys. Res. Commun.">
        <title>TAOK3 is a MAP3K contributing to osteoblast differentiation and skeletal mineralization.</title>
        <authorList>
            <person name="Li Z."/>
            <person name="Oh H."/>
            <person name="Cung M."/>
            <person name="Marquez S.J."/>
            <person name="Sun J."/>
            <person name="Hammad H."/>
            <person name="Janssens S."/>
            <person name="Pouliot P."/>
            <person name="Lambrecht B.N."/>
            <person name="Yang Y.S."/>
            <person name="Shim J.H."/>
            <person name="Greenblatt M.B."/>
        </authorList>
    </citation>
    <scope>FUNCTION</scope>
    <scope>DISRUPTION PHENOTYPE</scope>
</reference>
<reference key="9">
    <citation type="journal article" date="2020" name="Proc. Natl. Acad. Sci. U.S.A.">
        <title>TAO-kinase 3 governs the terminal differentiation of NOTCH2-dependent splenic conventional dendritic cells.</title>
        <authorList>
            <person name="Vanderkerken M."/>
            <person name="Maes B."/>
            <person name="Vandersarren L."/>
            <person name="Toussaint W."/>
            <person name="Deswarte K."/>
            <person name="Vanheerswynghels M."/>
            <person name="Pouliot P."/>
            <person name="Martens L."/>
            <person name="Van Gassen S."/>
            <person name="Arthur C.M."/>
            <person name="Kirkling M.E."/>
            <person name="Reizis B."/>
            <person name="Conrad D."/>
            <person name="Stowell S."/>
            <person name="Hammad H."/>
            <person name="Lambrecht B.N."/>
        </authorList>
    </citation>
    <scope>FUNCTION</scope>
    <scope>DISRUPTION PHENOTYPE</scope>
</reference>
<reference key="10">
    <citation type="journal article" date="2021" name="Mol. Metab.">
        <title>STE20-type kinase TAOK3 regulates hepatic lipid partitioning.</title>
        <authorList>
            <person name="Xia Y."/>
            <person name="Caputo M."/>
            <person name="Cansby E."/>
            <person name="Anand S.K."/>
            <person name="Suett S."/>
            <person name="Henricsson M."/>
            <person name="Porosk R."/>
            <person name="Marschall H.U."/>
            <person name="Blueher M."/>
            <person name="Mahlapuu M."/>
        </authorList>
    </citation>
    <scope>SUBCELLULAR LOCATION</scope>
    <scope>INDUCTION</scope>
</reference>
<reference key="11">
    <citation type="journal article" date="2022" name="J. Allergy Clin. Immunol.">
        <title>The STE20 kinase TAOK3 controls the development of house dust mite-induced asthma in mice.</title>
        <authorList>
            <person name="Maes B."/>
            <person name="Smole U."/>
            <person name="Vanderkerken M."/>
            <person name="Deswarte K."/>
            <person name="Van Moorleghem J."/>
            <person name="Vergote K."/>
            <person name="Vanheerswynghels M."/>
            <person name="De Wolf C."/>
            <person name="De Prijck S."/>
            <person name="Debeuf N."/>
            <person name="Pavie B."/>
            <person name="Toussaint W."/>
            <person name="Janssens S."/>
            <person name="Savvides S."/>
            <person name="Lambrecht B.N."/>
            <person name="Hammad H."/>
        </authorList>
    </citation>
    <scope>DISRUPTION PHENOTYPE</scope>
    <scope>MUTAGENESIS OF LYS-53</scope>
</reference>
<reference key="12">
    <citation type="journal article" date="2023" name="Immun. Ageing">
        <title>TAOK3 limits age-associated inflammation by negatively modulating macrophage differentiation and their production of TNFalpha.</title>
        <authorList>
            <person name="Poirier A."/>
            <person name="Wu C."/>
            <person name="Hincapie A.M."/>
            <person name="Martinez-Cordova Z."/>
            <person name="Abidin B.M."/>
            <person name="Tremblay M.L."/>
        </authorList>
    </citation>
    <scope>FUNCTION</scope>
    <scope>DISRUPTION PHENOTYPE</scope>
</reference>
<reference key="13">
    <citation type="journal article" date="2023" name="J. Exp. Med.">
        <title>STE20 kinase TAOK3 regulates type 2 immunity and metabolism in obesity.</title>
        <authorList>
            <person name="Maes B."/>
            <person name="Fayazpour F."/>
            <person name="Catrysse L."/>
            <person name="Lornet G."/>
            <person name="Van De Velde E."/>
            <person name="De Wolf C."/>
            <person name="De Prijck S."/>
            <person name="Van Moorleghem J."/>
            <person name="Vanheerswynghels M."/>
            <person name="Deswarte K."/>
            <person name="Descamps B."/>
            <person name="Vanhove C."/>
            <person name="Van der Schueren B."/>
            <person name="Vangoitsenhoven R."/>
            <person name="Hammad H."/>
            <person name="Janssens S."/>
            <person name="Lambrecht B.N."/>
        </authorList>
    </citation>
    <scope>FUNCTION</scope>
    <scope>DISRUPTION PHENOTYPE</scope>
</reference>
<reference key="14">
    <citation type="journal article" date="2024" name="Sci. Signal.">
        <title>The induction of SHP-1 degradation by TAOK3 ensures the responsiveness of T cells to TCR stimulation.</title>
        <authorList>
            <person name="Poirier A."/>
            <person name="Ormonde J.V.S."/>
            <person name="Aubry I."/>
            <person name="Abidin B.M."/>
            <person name="Feng C.H."/>
            <person name="Martinez-Cordova Z."/>
            <person name="Hincapie A.M."/>
            <person name="Wu C."/>
            <person name="Perez-Quintero L.A."/>
            <person name="Wang C.L."/>
            <person name="Gingras A.C."/>
            <person name="Madrenas J."/>
            <person name="Tremblay M.L."/>
        </authorList>
    </citation>
    <scope>DISRUPTION PHENOTYPE</scope>
</reference>
<gene>
    <name type="primary">Taok3</name>
</gene>
<evidence type="ECO:0000250" key="1">
    <source>
        <dbReference type="UniProtKB" id="Q53UA7"/>
    </source>
</evidence>
<evidence type="ECO:0000250" key="2">
    <source>
        <dbReference type="UniProtKB" id="Q9H2K8"/>
    </source>
</evidence>
<evidence type="ECO:0000255" key="3"/>
<evidence type="ECO:0000255" key="4">
    <source>
        <dbReference type="PROSITE-ProRule" id="PRU00159"/>
    </source>
</evidence>
<evidence type="ECO:0000255" key="5">
    <source>
        <dbReference type="PROSITE-ProRule" id="PRU10027"/>
    </source>
</evidence>
<evidence type="ECO:0000256" key="6">
    <source>
        <dbReference type="SAM" id="MobiDB-lite"/>
    </source>
</evidence>
<evidence type="ECO:0000269" key="7">
    <source>
    </source>
</evidence>
<evidence type="ECO:0000269" key="8">
    <source>
    </source>
</evidence>
<evidence type="ECO:0000269" key="9">
    <source>
    </source>
</evidence>
<evidence type="ECO:0000269" key="10">
    <source>
    </source>
</evidence>
<evidence type="ECO:0000269" key="11">
    <source>
    </source>
</evidence>
<evidence type="ECO:0000269" key="12">
    <source>
    </source>
</evidence>
<evidence type="ECO:0000269" key="13">
    <source>
    </source>
</evidence>
<evidence type="ECO:0000269" key="14">
    <source>
    </source>
</evidence>
<evidence type="ECO:0000305" key="15"/>
<evidence type="ECO:0007744" key="16">
    <source>
    </source>
</evidence>
<evidence type="ECO:0007744" key="17">
    <source>
    </source>
</evidence>
<evidence type="ECO:0007744" key="18">
    <source>
    </source>
</evidence>
<evidence type="ECO:0007744" key="19">
    <source>
    </source>
</evidence>